<dbReference type="EMBL" id="AK036895">
    <property type="protein sequence ID" value="BAC29628.1"/>
    <property type="status" value="ALT_SEQ"/>
    <property type="molecule type" value="mRNA"/>
</dbReference>
<dbReference type="EMBL" id="CT025653">
    <property type="status" value="NOT_ANNOTATED_CDS"/>
    <property type="molecule type" value="Genomic_DNA"/>
</dbReference>
<dbReference type="EMBL" id="BG243783">
    <property type="status" value="NOT_ANNOTATED_CDS"/>
    <property type="molecule type" value="Genomic_DNA"/>
</dbReference>
<dbReference type="CCDS" id="CCDS40568.1">
    <molecule id="Q8R0A2-2"/>
</dbReference>
<dbReference type="CCDS" id="CCDS52747.1">
    <molecule id="Q8R0A2-1"/>
</dbReference>
<dbReference type="RefSeq" id="NP_001108602.1">
    <molecule id="Q8R0A2-1"/>
    <property type="nucleotide sequence ID" value="NM_001115130.1"/>
</dbReference>
<dbReference type="RefSeq" id="NP_766353.2">
    <molecule id="Q8R0A2-2"/>
    <property type="nucleotide sequence ID" value="NM_172765.3"/>
</dbReference>
<dbReference type="SMR" id="Q8R0A2"/>
<dbReference type="BioGRID" id="231623">
    <property type="interactions" value="1"/>
</dbReference>
<dbReference type="FunCoup" id="Q8R0A2">
    <property type="interactions" value="1982"/>
</dbReference>
<dbReference type="STRING" id="10090.ENSMUSP00000110877"/>
<dbReference type="iPTMnet" id="Q8R0A2"/>
<dbReference type="PhosphoSitePlus" id="Q8R0A2"/>
<dbReference type="jPOST" id="Q8R0A2"/>
<dbReference type="PaxDb" id="10090-ENSMUSP00000110877"/>
<dbReference type="PeptideAtlas" id="Q8R0A2"/>
<dbReference type="ProteomicsDB" id="298495">
    <molecule id="Q8R0A2-1"/>
</dbReference>
<dbReference type="ProteomicsDB" id="298496">
    <molecule id="Q8R0A2-2"/>
</dbReference>
<dbReference type="Antibodypedia" id="33097">
    <property type="antibodies" value="164 antibodies from 23 providers"/>
</dbReference>
<dbReference type="DNASU" id="235132"/>
<dbReference type="Ensembl" id="ENSMUST00000115222.10">
    <molecule id="Q8R0A2-1"/>
    <property type="protein sequence ID" value="ENSMUSP00000110877.3"/>
    <property type="gene ID" value="ENSMUSG00000047412.17"/>
</dbReference>
<dbReference type="Ensembl" id="ENSMUST00000167346.2">
    <molecule id="Q8R0A2-2"/>
    <property type="protein sequence ID" value="ENSMUSP00000133109.2"/>
    <property type="gene ID" value="ENSMUSG00000047412.17"/>
</dbReference>
<dbReference type="Ensembl" id="ENSMUST00000216649.2">
    <molecule id="Q8R0A2-2"/>
    <property type="protein sequence ID" value="ENSMUSP00000149386.2"/>
    <property type="gene ID" value="ENSMUSG00000047412.17"/>
</dbReference>
<dbReference type="GeneID" id="235132"/>
<dbReference type="KEGG" id="mmu:235132"/>
<dbReference type="UCSC" id="uc009ord.2">
    <molecule id="Q8R0A2-2"/>
    <property type="organism name" value="mouse"/>
</dbReference>
<dbReference type="UCSC" id="uc009org.2">
    <molecule id="Q8R0A2-1"/>
    <property type="organism name" value="mouse"/>
</dbReference>
<dbReference type="AGR" id="MGI:1925123"/>
<dbReference type="CTD" id="29068"/>
<dbReference type="MGI" id="MGI:1925123">
    <property type="gene designation" value="Zbtb44"/>
</dbReference>
<dbReference type="VEuPathDB" id="HostDB:ENSMUSG00000047412"/>
<dbReference type="eggNOG" id="KOG1721">
    <property type="taxonomic scope" value="Eukaryota"/>
</dbReference>
<dbReference type="GeneTree" id="ENSGT00940000153306"/>
<dbReference type="HOGENOM" id="CLU_034849_1_0_1"/>
<dbReference type="InParanoid" id="Q8R0A2"/>
<dbReference type="OrthoDB" id="8117402at2759"/>
<dbReference type="PhylomeDB" id="Q8R0A2"/>
<dbReference type="TreeFam" id="TF332673"/>
<dbReference type="BioGRID-ORCS" id="235132">
    <property type="hits" value="0 hits in 77 CRISPR screens"/>
</dbReference>
<dbReference type="ChiTaRS" id="Zbtb44">
    <property type="organism name" value="mouse"/>
</dbReference>
<dbReference type="PRO" id="PR:Q8R0A2"/>
<dbReference type="Proteomes" id="UP000000589">
    <property type="component" value="Chromosome 9"/>
</dbReference>
<dbReference type="RNAct" id="Q8R0A2">
    <property type="molecule type" value="protein"/>
</dbReference>
<dbReference type="Bgee" id="ENSMUSG00000047412">
    <property type="expression patterns" value="Expressed in triceps brachii and 238 other cell types or tissues"/>
</dbReference>
<dbReference type="ExpressionAtlas" id="Q8R0A2">
    <property type="expression patterns" value="baseline and differential"/>
</dbReference>
<dbReference type="GO" id="GO:0005634">
    <property type="term" value="C:nucleus"/>
    <property type="evidence" value="ECO:0007669"/>
    <property type="project" value="UniProtKB-SubCell"/>
</dbReference>
<dbReference type="GO" id="GO:0003677">
    <property type="term" value="F:DNA binding"/>
    <property type="evidence" value="ECO:0007669"/>
    <property type="project" value="UniProtKB-KW"/>
</dbReference>
<dbReference type="GO" id="GO:0008270">
    <property type="term" value="F:zinc ion binding"/>
    <property type="evidence" value="ECO:0007669"/>
    <property type="project" value="UniProtKB-KW"/>
</dbReference>
<dbReference type="CDD" id="cd18228">
    <property type="entry name" value="BTB_POZ_ZBTB44"/>
    <property type="match status" value="1"/>
</dbReference>
<dbReference type="FunFam" id="3.30.160.60:FF:000266">
    <property type="entry name" value="zinc finger and BTB domain-containing protein 44 isoform X1"/>
    <property type="match status" value="1"/>
</dbReference>
<dbReference type="FunFam" id="3.30.160.60:FF:000278">
    <property type="entry name" value="zinc finger and BTB domain-containing protein 44 isoform X1"/>
    <property type="match status" value="1"/>
</dbReference>
<dbReference type="Gene3D" id="3.30.160.60">
    <property type="entry name" value="Classic Zinc Finger"/>
    <property type="match status" value="2"/>
</dbReference>
<dbReference type="Gene3D" id="3.30.710.10">
    <property type="entry name" value="Potassium Channel Kv1.1, Chain A"/>
    <property type="match status" value="1"/>
</dbReference>
<dbReference type="InterPro" id="IPR000210">
    <property type="entry name" value="BTB/POZ_dom"/>
</dbReference>
<dbReference type="InterPro" id="IPR011333">
    <property type="entry name" value="SKP1/BTB/POZ_sf"/>
</dbReference>
<dbReference type="InterPro" id="IPR036236">
    <property type="entry name" value="Znf_C2H2_sf"/>
</dbReference>
<dbReference type="InterPro" id="IPR013087">
    <property type="entry name" value="Znf_C2H2_type"/>
</dbReference>
<dbReference type="InterPro" id="IPR050457">
    <property type="entry name" value="ZnFinger_BTB_dom_contain"/>
</dbReference>
<dbReference type="PANTHER" id="PTHR46105">
    <property type="entry name" value="AGAP004733-PA"/>
    <property type="match status" value="1"/>
</dbReference>
<dbReference type="PANTHER" id="PTHR46105:SF5">
    <property type="entry name" value="ZINC FINGER AND BTB DOMAIN-CONTAINING PROTEIN 44 ISOFORM X1"/>
    <property type="match status" value="1"/>
</dbReference>
<dbReference type="Pfam" id="PF00651">
    <property type="entry name" value="BTB"/>
    <property type="match status" value="1"/>
</dbReference>
<dbReference type="Pfam" id="PF00096">
    <property type="entry name" value="zf-C2H2"/>
    <property type="match status" value="2"/>
</dbReference>
<dbReference type="SMART" id="SM00225">
    <property type="entry name" value="BTB"/>
    <property type="match status" value="1"/>
</dbReference>
<dbReference type="SMART" id="SM00355">
    <property type="entry name" value="ZnF_C2H2"/>
    <property type="match status" value="2"/>
</dbReference>
<dbReference type="SUPFAM" id="SSF57667">
    <property type="entry name" value="beta-beta-alpha zinc fingers"/>
    <property type="match status" value="1"/>
</dbReference>
<dbReference type="SUPFAM" id="SSF54695">
    <property type="entry name" value="POZ domain"/>
    <property type="match status" value="1"/>
</dbReference>
<dbReference type="PROSITE" id="PS50097">
    <property type="entry name" value="BTB"/>
    <property type="match status" value="1"/>
</dbReference>
<dbReference type="PROSITE" id="PS00028">
    <property type="entry name" value="ZINC_FINGER_C2H2_1"/>
    <property type="match status" value="2"/>
</dbReference>
<dbReference type="PROSITE" id="PS50157">
    <property type="entry name" value="ZINC_FINGER_C2H2_2"/>
    <property type="match status" value="2"/>
</dbReference>
<organism>
    <name type="scientific">Mus musculus</name>
    <name type="common">Mouse</name>
    <dbReference type="NCBI Taxonomy" id="10090"/>
    <lineage>
        <taxon>Eukaryota</taxon>
        <taxon>Metazoa</taxon>
        <taxon>Chordata</taxon>
        <taxon>Craniata</taxon>
        <taxon>Vertebrata</taxon>
        <taxon>Euteleostomi</taxon>
        <taxon>Mammalia</taxon>
        <taxon>Eutheria</taxon>
        <taxon>Euarchontoglires</taxon>
        <taxon>Glires</taxon>
        <taxon>Rodentia</taxon>
        <taxon>Myomorpha</taxon>
        <taxon>Muroidea</taxon>
        <taxon>Muridae</taxon>
        <taxon>Murinae</taxon>
        <taxon>Mus</taxon>
        <taxon>Mus</taxon>
    </lineage>
</organism>
<comment type="subcellular location">
    <subcellularLocation>
        <location evidence="1">Nucleus</location>
    </subcellularLocation>
</comment>
<comment type="alternative products">
    <event type="alternative splicing"/>
    <isoform>
        <id>Q8R0A2-1</id>
        <name>1</name>
        <sequence type="displayed"/>
    </isoform>
    <isoform>
        <id>Q8R0A2-2</id>
        <name>2</name>
        <sequence type="described" ref="VSP_022838"/>
    </isoform>
</comment>
<comment type="sequence caution" evidence="7">
    <conflict type="erroneous termination">
        <sequence resource="EMBL-CDS" id="BAC29628"/>
    </conflict>
    <text>Truncated C-terminus.</text>
</comment>
<sequence length="453" mass="50175">MGVKTFTHSSSSHSQEMLGKLNMLRNDGHFCDITIRVQDKIFRAHKVVLAACSDFFRTKLVGQTEDENKNVLDLHHVTVTGFIPLLEYAYTATLSINTENIIDVLAAASYMQMFSVASTCSEFMKSSILWNTPNSQPEKSLDAGQENSSNCNFTSRDGSISPVSSECSAVERTIPVCRESRRKRKSYIVMSPESPVKCSTQTSSPQVLNSSASYAENRSQPVDSSLAFPWTFPFGIDRRIQPEKAKQAENTRTLELPGPSEAGRRVADYVTCESTKPTLPLGTEEDVRVKVERLSDEEVHEEVSQPVSASQSSLSDQQTVPGSEPVQEDLLISPQSSSIGSVDEGVTEGLPTLQSTSSTNAHADDDDRLENVQYPYQLYIAPSTSSTERPSPNGPDRPFQCPTCGVRFTRIQNLKQHMLIHSGIKPFQCDCCGKKFTRAYSLKMHRLKHEVIS</sequence>
<reference key="1">
    <citation type="journal article" date="2005" name="Science">
        <title>The transcriptional landscape of the mammalian genome.</title>
        <authorList>
            <person name="Carninci P."/>
            <person name="Kasukawa T."/>
            <person name="Katayama S."/>
            <person name="Gough J."/>
            <person name="Frith M.C."/>
            <person name="Maeda N."/>
            <person name="Oyama R."/>
            <person name="Ravasi T."/>
            <person name="Lenhard B."/>
            <person name="Wells C."/>
            <person name="Kodzius R."/>
            <person name="Shimokawa K."/>
            <person name="Bajic V.B."/>
            <person name="Brenner S.E."/>
            <person name="Batalov S."/>
            <person name="Forrest A.R."/>
            <person name="Zavolan M."/>
            <person name="Davis M.J."/>
            <person name="Wilming L.G."/>
            <person name="Aidinis V."/>
            <person name="Allen J.E."/>
            <person name="Ambesi-Impiombato A."/>
            <person name="Apweiler R."/>
            <person name="Aturaliya R.N."/>
            <person name="Bailey T.L."/>
            <person name="Bansal M."/>
            <person name="Baxter L."/>
            <person name="Beisel K.W."/>
            <person name="Bersano T."/>
            <person name="Bono H."/>
            <person name="Chalk A.M."/>
            <person name="Chiu K.P."/>
            <person name="Choudhary V."/>
            <person name="Christoffels A."/>
            <person name="Clutterbuck D.R."/>
            <person name="Crowe M.L."/>
            <person name="Dalla E."/>
            <person name="Dalrymple B.P."/>
            <person name="de Bono B."/>
            <person name="Della Gatta G."/>
            <person name="di Bernardo D."/>
            <person name="Down T."/>
            <person name="Engstrom P."/>
            <person name="Fagiolini M."/>
            <person name="Faulkner G."/>
            <person name="Fletcher C.F."/>
            <person name="Fukushima T."/>
            <person name="Furuno M."/>
            <person name="Futaki S."/>
            <person name="Gariboldi M."/>
            <person name="Georgii-Hemming P."/>
            <person name="Gingeras T.R."/>
            <person name="Gojobori T."/>
            <person name="Green R.E."/>
            <person name="Gustincich S."/>
            <person name="Harbers M."/>
            <person name="Hayashi Y."/>
            <person name="Hensch T.K."/>
            <person name="Hirokawa N."/>
            <person name="Hill D."/>
            <person name="Huminiecki L."/>
            <person name="Iacono M."/>
            <person name="Ikeo K."/>
            <person name="Iwama A."/>
            <person name="Ishikawa T."/>
            <person name="Jakt M."/>
            <person name="Kanapin A."/>
            <person name="Katoh M."/>
            <person name="Kawasawa Y."/>
            <person name="Kelso J."/>
            <person name="Kitamura H."/>
            <person name="Kitano H."/>
            <person name="Kollias G."/>
            <person name="Krishnan S.P."/>
            <person name="Kruger A."/>
            <person name="Kummerfeld S.K."/>
            <person name="Kurochkin I.V."/>
            <person name="Lareau L.F."/>
            <person name="Lazarevic D."/>
            <person name="Lipovich L."/>
            <person name="Liu J."/>
            <person name="Liuni S."/>
            <person name="McWilliam S."/>
            <person name="Madan Babu M."/>
            <person name="Madera M."/>
            <person name="Marchionni L."/>
            <person name="Matsuda H."/>
            <person name="Matsuzawa S."/>
            <person name="Miki H."/>
            <person name="Mignone F."/>
            <person name="Miyake S."/>
            <person name="Morris K."/>
            <person name="Mottagui-Tabar S."/>
            <person name="Mulder N."/>
            <person name="Nakano N."/>
            <person name="Nakauchi H."/>
            <person name="Ng P."/>
            <person name="Nilsson R."/>
            <person name="Nishiguchi S."/>
            <person name="Nishikawa S."/>
            <person name="Nori F."/>
            <person name="Ohara O."/>
            <person name="Okazaki Y."/>
            <person name="Orlando V."/>
            <person name="Pang K.C."/>
            <person name="Pavan W.J."/>
            <person name="Pavesi G."/>
            <person name="Pesole G."/>
            <person name="Petrovsky N."/>
            <person name="Piazza S."/>
            <person name="Reed J."/>
            <person name="Reid J.F."/>
            <person name="Ring B.Z."/>
            <person name="Ringwald M."/>
            <person name="Rost B."/>
            <person name="Ruan Y."/>
            <person name="Salzberg S.L."/>
            <person name="Sandelin A."/>
            <person name="Schneider C."/>
            <person name="Schoenbach C."/>
            <person name="Sekiguchi K."/>
            <person name="Semple C.A."/>
            <person name="Seno S."/>
            <person name="Sessa L."/>
            <person name="Sheng Y."/>
            <person name="Shibata Y."/>
            <person name="Shimada H."/>
            <person name="Shimada K."/>
            <person name="Silva D."/>
            <person name="Sinclair B."/>
            <person name="Sperling S."/>
            <person name="Stupka E."/>
            <person name="Sugiura K."/>
            <person name="Sultana R."/>
            <person name="Takenaka Y."/>
            <person name="Taki K."/>
            <person name="Tammoja K."/>
            <person name="Tan S.L."/>
            <person name="Tang S."/>
            <person name="Taylor M.S."/>
            <person name="Tegner J."/>
            <person name="Teichmann S.A."/>
            <person name="Ueda H.R."/>
            <person name="van Nimwegen E."/>
            <person name="Verardo R."/>
            <person name="Wei C.L."/>
            <person name="Yagi K."/>
            <person name="Yamanishi H."/>
            <person name="Zabarovsky E."/>
            <person name="Zhu S."/>
            <person name="Zimmer A."/>
            <person name="Hide W."/>
            <person name="Bult C."/>
            <person name="Grimmond S.M."/>
            <person name="Teasdale R.D."/>
            <person name="Liu E.T."/>
            <person name="Brusic V."/>
            <person name="Quackenbush J."/>
            <person name="Wahlestedt C."/>
            <person name="Mattick J.S."/>
            <person name="Hume D.A."/>
            <person name="Kai C."/>
            <person name="Sasaki D."/>
            <person name="Tomaru Y."/>
            <person name="Fukuda S."/>
            <person name="Kanamori-Katayama M."/>
            <person name="Suzuki M."/>
            <person name="Aoki J."/>
            <person name="Arakawa T."/>
            <person name="Iida J."/>
            <person name="Imamura K."/>
            <person name="Itoh M."/>
            <person name="Kato T."/>
            <person name="Kawaji H."/>
            <person name="Kawagashira N."/>
            <person name="Kawashima T."/>
            <person name="Kojima M."/>
            <person name="Kondo S."/>
            <person name="Konno H."/>
            <person name="Nakano K."/>
            <person name="Ninomiya N."/>
            <person name="Nishio T."/>
            <person name="Okada M."/>
            <person name="Plessy C."/>
            <person name="Shibata K."/>
            <person name="Shiraki T."/>
            <person name="Suzuki S."/>
            <person name="Tagami M."/>
            <person name="Waki K."/>
            <person name="Watahiki A."/>
            <person name="Okamura-Oho Y."/>
            <person name="Suzuki H."/>
            <person name="Kawai J."/>
            <person name="Hayashizaki Y."/>
        </authorList>
    </citation>
    <scope>NUCLEOTIDE SEQUENCE [LARGE SCALE MRNA] (ISOFORM 2)</scope>
    <source>
        <strain>C57BL/6J</strain>
        <tissue>Vagina</tissue>
    </source>
</reference>
<reference key="2">
    <citation type="journal article" date="2009" name="PLoS Biol.">
        <title>Lineage-specific biology revealed by a finished genome assembly of the mouse.</title>
        <authorList>
            <person name="Church D.M."/>
            <person name="Goodstadt L."/>
            <person name="Hillier L.W."/>
            <person name="Zody M.C."/>
            <person name="Goldstein S."/>
            <person name="She X."/>
            <person name="Bult C.J."/>
            <person name="Agarwala R."/>
            <person name="Cherry J.L."/>
            <person name="DiCuccio M."/>
            <person name="Hlavina W."/>
            <person name="Kapustin Y."/>
            <person name="Meric P."/>
            <person name="Maglott D."/>
            <person name="Birtle Z."/>
            <person name="Marques A.C."/>
            <person name="Graves T."/>
            <person name="Zhou S."/>
            <person name="Teague B."/>
            <person name="Potamousis K."/>
            <person name="Churas C."/>
            <person name="Place M."/>
            <person name="Herschleb J."/>
            <person name="Runnheim R."/>
            <person name="Forrest D."/>
            <person name="Amos-Landgraf J."/>
            <person name="Schwartz D.C."/>
            <person name="Cheng Z."/>
            <person name="Lindblad-Toh K."/>
            <person name="Eichler E.E."/>
            <person name="Ponting C.P."/>
        </authorList>
    </citation>
    <scope>NUCLEOTIDE SEQUENCE [LARGE SCALE GENOMIC DNA]</scope>
    <source>
        <strain>C57BL/6J</strain>
    </source>
</reference>
<reference key="3">
    <citation type="journal article" date="2004" name="Genome Res.">
        <title>The status, quality, and expansion of the NIH full-length cDNA project: the Mammalian Gene Collection (MGC).</title>
        <authorList>
            <consortium name="The MGC Project Team"/>
        </authorList>
    </citation>
    <scope>NUCLEOTIDE SEQUENCE [LARGE SCALE MRNA] OF 287-453 (ISOFORM 1)</scope>
</reference>
<reference key="4">
    <citation type="journal article" date="2007" name="Proc. Natl. Acad. Sci. U.S.A.">
        <title>Large-scale phosphorylation analysis of mouse liver.</title>
        <authorList>
            <person name="Villen J."/>
            <person name="Beausoleil S.A."/>
            <person name="Gerber S.A."/>
            <person name="Gygi S.P."/>
        </authorList>
    </citation>
    <scope>PHOSPHORYLATION [LARGE SCALE ANALYSIS] AT SER-191 AND SER-194</scope>
    <scope>IDENTIFICATION BY MASS SPECTROMETRY [LARGE SCALE ANALYSIS]</scope>
    <source>
        <tissue>Liver</tissue>
    </source>
</reference>
<reference key="5">
    <citation type="journal article" date="2010" name="Cell">
        <title>A tissue-specific atlas of mouse protein phosphorylation and expression.</title>
        <authorList>
            <person name="Huttlin E.L."/>
            <person name="Jedrychowski M.P."/>
            <person name="Elias J.E."/>
            <person name="Goswami T."/>
            <person name="Rad R."/>
            <person name="Beausoleil S.A."/>
            <person name="Villen J."/>
            <person name="Haas W."/>
            <person name="Sowa M.E."/>
            <person name="Gygi S.P."/>
        </authorList>
    </citation>
    <scope>PHOSPHORYLATION [LARGE SCALE ANALYSIS] AT SER-159; SER-161; SER-165; SER-191; SER-194; SER-199 AND THR-200</scope>
    <scope>IDENTIFICATION BY MASS SPECTROMETRY [LARGE SCALE ANALYSIS]</scope>
    <source>
        <tissue>Brain</tissue>
        <tissue>Brown adipose tissue</tissue>
        <tissue>Kidney</tissue>
        <tissue>Liver</tissue>
        <tissue>Lung</tissue>
        <tissue>Pancreas</tissue>
        <tissue>Spleen</tissue>
        <tissue>Testis</tissue>
    </source>
</reference>
<proteinExistence type="evidence at protein level"/>
<feature type="chain" id="PRO_0000274609" description="Zinc finger and BTB domain-containing protein 44">
    <location>
        <begin position="1"/>
        <end position="453"/>
    </location>
</feature>
<feature type="domain" description="BTB" evidence="3">
    <location>
        <begin position="31"/>
        <end position="98"/>
    </location>
</feature>
<feature type="zinc finger region" description="C2H2-type 1" evidence="4">
    <location>
        <begin position="399"/>
        <end position="421"/>
    </location>
</feature>
<feature type="zinc finger region" description="C2H2-type 2" evidence="4">
    <location>
        <begin position="427"/>
        <end position="449"/>
    </location>
</feature>
<feature type="region of interest" description="Disordered" evidence="5">
    <location>
        <begin position="135"/>
        <end position="157"/>
    </location>
</feature>
<feature type="region of interest" description="Disordered" evidence="5">
    <location>
        <begin position="241"/>
        <end position="266"/>
    </location>
</feature>
<feature type="region of interest" description="Disordered" evidence="5">
    <location>
        <begin position="295"/>
        <end position="324"/>
    </location>
</feature>
<feature type="region of interest" description="Disordered" evidence="5">
    <location>
        <begin position="336"/>
        <end position="366"/>
    </location>
</feature>
<feature type="compositionally biased region" description="Polar residues" evidence="5">
    <location>
        <begin position="145"/>
        <end position="157"/>
    </location>
</feature>
<feature type="compositionally biased region" description="Low complexity" evidence="5">
    <location>
        <begin position="304"/>
        <end position="318"/>
    </location>
</feature>
<feature type="compositionally biased region" description="Polar residues" evidence="5">
    <location>
        <begin position="352"/>
        <end position="361"/>
    </location>
</feature>
<feature type="modified residue" description="Phosphoserine" evidence="2">
    <location>
        <position position="135"/>
    </location>
</feature>
<feature type="modified residue" description="Phosphoserine" evidence="9">
    <location>
        <position position="159"/>
    </location>
</feature>
<feature type="modified residue" description="Phosphoserine" evidence="9">
    <location>
        <position position="161"/>
    </location>
</feature>
<feature type="modified residue" description="Phosphoserine" evidence="9">
    <location>
        <position position="165"/>
    </location>
</feature>
<feature type="modified residue" description="Phosphoserine" evidence="8 9">
    <location>
        <position position="191"/>
    </location>
</feature>
<feature type="modified residue" description="Phosphoserine" evidence="8 9">
    <location>
        <position position="194"/>
    </location>
</feature>
<feature type="modified residue" description="Phosphoserine" evidence="9">
    <location>
        <position position="199"/>
    </location>
</feature>
<feature type="modified residue" description="Phosphothreonine" evidence="9">
    <location>
        <position position="200"/>
    </location>
</feature>
<feature type="cross-link" description="Glycyl lysine isopeptide (Lys-Gly) (interchain with G-Cter in SUMO2)" evidence="2">
    <location>
        <position position="4"/>
    </location>
</feature>
<feature type="cross-link" description="Glycyl lysine isopeptide (Lys-Gly) (interchain with G-Cter in SUMO2)" evidence="2">
    <location>
        <position position="290"/>
    </location>
</feature>
<feature type="splice variant" id="VSP_022838" description="In isoform 2." evidence="6">
    <location>
        <begin position="368"/>
        <end position="385"/>
    </location>
</feature>
<gene>
    <name type="primary">Zbtb44</name>
    <name type="synonym">Btbd15</name>
</gene>
<name>ZBT44_MOUSE</name>
<keyword id="KW-0025">Alternative splicing</keyword>
<keyword id="KW-0238">DNA-binding</keyword>
<keyword id="KW-1017">Isopeptide bond</keyword>
<keyword id="KW-0479">Metal-binding</keyword>
<keyword id="KW-0539">Nucleus</keyword>
<keyword id="KW-0597">Phosphoprotein</keyword>
<keyword id="KW-1185">Reference proteome</keyword>
<keyword id="KW-0677">Repeat</keyword>
<keyword id="KW-0804">Transcription</keyword>
<keyword id="KW-0805">Transcription regulation</keyword>
<keyword id="KW-0832">Ubl conjugation</keyword>
<keyword id="KW-0862">Zinc</keyword>
<keyword id="KW-0863">Zinc-finger</keyword>
<protein>
    <recommendedName>
        <fullName>Zinc finger and BTB domain-containing protein 44</fullName>
    </recommendedName>
    <alternativeName>
        <fullName>BTB/POZ domain-containing protein 15</fullName>
    </alternativeName>
</protein>
<evidence type="ECO:0000250" key="1"/>
<evidence type="ECO:0000250" key="2">
    <source>
        <dbReference type="UniProtKB" id="Q8NCP5"/>
    </source>
</evidence>
<evidence type="ECO:0000255" key="3">
    <source>
        <dbReference type="PROSITE-ProRule" id="PRU00037"/>
    </source>
</evidence>
<evidence type="ECO:0000255" key="4">
    <source>
        <dbReference type="PROSITE-ProRule" id="PRU00042"/>
    </source>
</evidence>
<evidence type="ECO:0000256" key="5">
    <source>
        <dbReference type="SAM" id="MobiDB-lite"/>
    </source>
</evidence>
<evidence type="ECO:0000303" key="6">
    <source>
    </source>
</evidence>
<evidence type="ECO:0000305" key="7"/>
<evidence type="ECO:0007744" key="8">
    <source>
    </source>
</evidence>
<evidence type="ECO:0007744" key="9">
    <source>
    </source>
</evidence>
<accession>Q8R0A2</accession>
<accession>Q8CB31</accession>